<proteinExistence type="evidence at transcript level"/>
<comment type="subcellular location">
    <subcellularLocation>
        <location evidence="1">Nucleus</location>
    </subcellularLocation>
</comment>
<comment type="similarity">
    <text evidence="3">Belongs to the REXO4 family.</text>
</comment>
<evidence type="ECO:0000250" key="1"/>
<evidence type="ECO:0000256" key="2">
    <source>
        <dbReference type="SAM" id="MobiDB-lite"/>
    </source>
</evidence>
<evidence type="ECO:0000305" key="3"/>
<name>REXO4_XENTR</name>
<keyword id="KW-0269">Exonuclease</keyword>
<keyword id="KW-0378">Hydrolase</keyword>
<keyword id="KW-0540">Nuclease</keyword>
<keyword id="KW-0539">Nucleus</keyword>
<keyword id="KW-1185">Reference proteome</keyword>
<sequence length="414" mass="45546">MAKAKVKQDQSPSGSALGKAANSQKQTKKQKKKKFWKNHPKIAGKTSEAKTLFPLLPPKQPQEFSSNWKALQELLKPKLNPAAPATPSEKFPKKDQKVSEKKNGDPEPPKSTPKINGGITSVTPKEAKAPSQAPPTKAVEVKKEKKRKIKAEGTEQLDPPKKPQGGTQPEPPKVDIWFDDVDPDDIEAALGPEAGRIAREMQGVTETAPPTAEKVLVKEKAFEGLTRTVAMDCEMVGVGLDGEESMLARVSIVNLFGKCVYDKYVRPTERVTDYRTAVSGIRPDDIKNGEAFKDVQAEVAEILRGRTLVGHAVHNDLKILFLDHPKKAIRDTQKYKPFKEKVKSGRPSLKLLCEKILNVKVQTGEHCSVQDAQAAMRLYTMEKKCWEAAIKAKYAGVTAAKAKGPQKDKQPPAQ</sequence>
<organism>
    <name type="scientific">Xenopus tropicalis</name>
    <name type="common">Western clawed frog</name>
    <name type="synonym">Silurana tropicalis</name>
    <dbReference type="NCBI Taxonomy" id="8364"/>
    <lineage>
        <taxon>Eukaryota</taxon>
        <taxon>Metazoa</taxon>
        <taxon>Chordata</taxon>
        <taxon>Craniata</taxon>
        <taxon>Vertebrata</taxon>
        <taxon>Euteleostomi</taxon>
        <taxon>Amphibia</taxon>
        <taxon>Batrachia</taxon>
        <taxon>Anura</taxon>
        <taxon>Pipoidea</taxon>
        <taxon>Pipidae</taxon>
        <taxon>Xenopodinae</taxon>
        <taxon>Xenopus</taxon>
        <taxon>Silurana</taxon>
    </lineage>
</organism>
<gene>
    <name type="primary">rexo4</name>
    <name type="synonym">xpmc2</name>
</gene>
<accession>Q6DEW6</accession>
<reference key="1">
    <citation type="submission" date="2004-07" db="EMBL/GenBank/DDBJ databases">
        <authorList>
            <consortium name="NIH - Xenopus Gene Collection (XGC) project"/>
        </authorList>
    </citation>
    <scope>NUCLEOTIDE SEQUENCE [LARGE SCALE MRNA]</scope>
    <source>
        <tissue>Embryo</tissue>
    </source>
</reference>
<feature type="chain" id="PRO_0000131706" description="RNA exonuclease 4">
    <location>
        <begin position="1"/>
        <end position="414"/>
    </location>
</feature>
<feature type="domain" description="Exonuclease">
    <location>
        <begin position="228"/>
        <end position="379"/>
    </location>
</feature>
<feature type="region of interest" description="Disordered" evidence="2">
    <location>
        <begin position="1"/>
        <end position="174"/>
    </location>
</feature>
<feature type="compositionally biased region" description="Basic residues" evidence="2">
    <location>
        <begin position="26"/>
        <end position="42"/>
    </location>
</feature>
<feature type="compositionally biased region" description="Basic and acidic residues" evidence="2">
    <location>
        <begin position="90"/>
        <end position="108"/>
    </location>
</feature>
<feature type="compositionally biased region" description="Basic and acidic residues" evidence="2">
    <location>
        <begin position="150"/>
        <end position="161"/>
    </location>
</feature>
<dbReference type="EC" id="3.1.-.-"/>
<dbReference type="EMBL" id="BC076977">
    <property type="protein sequence ID" value="AAH76977.1"/>
    <property type="molecule type" value="mRNA"/>
</dbReference>
<dbReference type="RefSeq" id="NP_001006868.1">
    <property type="nucleotide sequence ID" value="NM_001006867.1"/>
</dbReference>
<dbReference type="SMR" id="Q6DEW6"/>
<dbReference type="FunCoup" id="Q6DEW6">
    <property type="interactions" value="2345"/>
</dbReference>
<dbReference type="STRING" id="8364.ENSXETP00000022331"/>
<dbReference type="PaxDb" id="8364-ENSXETP00000049947"/>
<dbReference type="DNASU" id="448635"/>
<dbReference type="GeneID" id="448635"/>
<dbReference type="CTD" id="57109"/>
<dbReference type="eggNOG" id="KOG2249">
    <property type="taxonomic scope" value="Eukaryota"/>
</dbReference>
<dbReference type="InParanoid" id="Q6DEW6"/>
<dbReference type="OrthoDB" id="8191639at2759"/>
<dbReference type="Proteomes" id="UP000008143">
    <property type="component" value="Unplaced"/>
</dbReference>
<dbReference type="Bgee" id="ENSXETG00000023096">
    <property type="expression patterns" value="Expressed in neurula embryo and 12 other cell types or tissues"/>
</dbReference>
<dbReference type="ExpressionAtlas" id="Q6DEW6">
    <property type="expression patterns" value="differential"/>
</dbReference>
<dbReference type="GO" id="GO:0005634">
    <property type="term" value="C:nucleus"/>
    <property type="evidence" value="ECO:0007669"/>
    <property type="project" value="UniProtKB-SubCell"/>
</dbReference>
<dbReference type="GO" id="GO:0008408">
    <property type="term" value="F:3'-5' exonuclease activity"/>
    <property type="evidence" value="ECO:0007669"/>
    <property type="project" value="InterPro"/>
</dbReference>
<dbReference type="GO" id="GO:0003676">
    <property type="term" value="F:nucleic acid binding"/>
    <property type="evidence" value="ECO:0007669"/>
    <property type="project" value="InterPro"/>
</dbReference>
<dbReference type="GO" id="GO:0006364">
    <property type="term" value="P:rRNA processing"/>
    <property type="evidence" value="ECO:0007669"/>
    <property type="project" value="InterPro"/>
</dbReference>
<dbReference type="CDD" id="cd06144">
    <property type="entry name" value="REX4_like"/>
    <property type="match status" value="1"/>
</dbReference>
<dbReference type="FunFam" id="3.30.420.10:FF:000007">
    <property type="entry name" value="Interferon-stimulated exonuclease gene 20"/>
    <property type="match status" value="1"/>
</dbReference>
<dbReference type="Gene3D" id="3.30.420.10">
    <property type="entry name" value="Ribonuclease H-like superfamily/Ribonuclease H"/>
    <property type="match status" value="1"/>
</dbReference>
<dbReference type="InterPro" id="IPR013520">
    <property type="entry name" value="Exonuclease_RNaseT/DNA_pol3"/>
</dbReference>
<dbReference type="InterPro" id="IPR037431">
    <property type="entry name" value="REX4_DEDDh_dom"/>
</dbReference>
<dbReference type="InterPro" id="IPR047021">
    <property type="entry name" value="REXO1/3/4-like"/>
</dbReference>
<dbReference type="InterPro" id="IPR012337">
    <property type="entry name" value="RNaseH-like_sf"/>
</dbReference>
<dbReference type="InterPro" id="IPR036397">
    <property type="entry name" value="RNaseH_sf"/>
</dbReference>
<dbReference type="PANTHER" id="PTHR12801:SF158">
    <property type="entry name" value="RNA EXONUCLEASE 4"/>
    <property type="match status" value="1"/>
</dbReference>
<dbReference type="PANTHER" id="PTHR12801">
    <property type="entry name" value="RNA EXONUCLEASE REXO1 / RECO3 FAMILY MEMBER-RELATED"/>
    <property type="match status" value="1"/>
</dbReference>
<dbReference type="Pfam" id="PF00929">
    <property type="entry name" value="RNase_T"/>
    <property type="match status" value="1"/>
</dbReference>
<dbReference type="SMART" id="SM00479">
    <property type="entry name" value="EXOIII"/>
    <property type="match status" value="1"/>
</dbReference>
<dbReference type="SUPFAM" id="SSF53098">
    <property type="entry name" value="Ribonuclease H-like"/>
    <property type="match status" value="1"/>
</dbReference>
<protein>
    <recommendedName>
        <fullName>RNA exonuclease 4</fullName>
        <ecNumber>3.1.-.-</ecNumber>
    </recommendedName>
    <alternativeName>
        <fullName>Exonuclease XPMC2</fullName>
    </alternativeName>
    <alternativeName>
        <fullName>Prevents mitotic catastrophe 2 protein</fullName>
    </alternativeName>
</protein>